<dbReference type="EMBL" id="CR382130">
    <property type="protein sequence ID" value="CAG81063.1"/>
    <property type="molecule type" value="Genomic_DNA"/>
</dbReference>
<dbReference type="RefSeq" id="XP_502875.1">
    <property type="nucleotide sequence ID" value="XM_502875.1"/>
</dbReference>
<dbReference type="SMR" id="Q6C8Y7"/>
<dbReference type="FunCoup" id="Q6C8Y7">
    <property type="interactions" value="312"/>
</dbReference>
<dbReference type="STRING" id="284591.Q6C8Y7"/>
<dbReference type="EnsemblFungi" id="CAG81063">
    <property type="protein sequence ID" value="CAG81063"/>
    <property type="gene ID" value="YALI0_D15774g"/>
</dbReference>
<dbReference type="KEGG" id="yli:2910177"/>
<dbReference type="VEuPathDB" id="FungiDB:YALI0_D15774g"/>
<dbReference type="HOGENOM" id="CLU_007884_7_1_1"/>
<dbReference type="InParanoid" id="Q6C8Y7"/>
<dbReference type="OrthoDB" id="66241at4891"/>
<dbReference type="Proteomes" id="UP000001300">
    <property type="component" value="Chromosome D"/>
</dbReference>
<dbReference type="GO" id="GO:0005759">
    <property type="term" value="C:mitochondrial matrix"/>
    <property type="evidence" value="ECO:0000318"/>
    <property type="project" value="GO_Central"/>
</dbReference>
<dbReference type="GO" id="GO:0016740">
    <property type="term" value="F:transferase activity"/>
    <property type="evidence" value="ECO:0007669"/>
    <property type="project" value="UniProtKB-KW"/>
</dbReference>
<dbReference type="GO" id="GO:0016226">
    <property type="term" value="P:iron-sulfur cluster assembly"/>
    <property type="evidence" value="ECO:0000318"/>
    <property type="project" value="GO_Central"/>
</dbReference>
<dbReference type="FunFam" id="3.30.1360.120:FF:000049">
    <property type="entry name" value="Putative transferase CAF17, mitochondrial"/>
    <property type="match status" value="1"/>
</dbReference>
<dbReference type="Gene3D" id="3.30.1360.120">
    <property type="entry name" value="Probable tRNA modification gtpase trme, domain 1"/>
    <property type="match status" value="1"/>
</dbReference>
<dbReference type="InterPro" id="IPR027266">
    <property type="entry name" value="TrmE/GcvT_dom1"/>
</dbReference>
<dbReference type="InterPro" id="IPR045179">
    <property type="entry name" value="YgfZ/GcvT"/>
</dbReference>
<dbReference type="InterPro" id="IPR017703">
    <property type="entry name" value="YgfZ/GcvT_CS"/>
</dbReference>
<dbReference type="NCBIfam" id="TIGR03317">
    <property type="entry name" value="ygfZ_signature"/>
    <property type="match status" value="1"/>
</dbReference>
<dbReference type="PANTHER" id="PTHR22602">
    <property type="entry name" value="TRANSFERASE CAF17, MITOCHONDRIAL-RELATED"/>
    <property type="match status" value="1"/>
</dbReference>
<dbReference type="PANTHER" id="PTHR22602:SF0">
    <property type="entry name" value="TRANSFERASE CAF17, MITOCHONDRIAL-RELATED"/>
    <property type="match status" value="1"/>
</dbReference>
<dbReference type="SUPFAM" id="SSF103025">
    <property type="entry name" value="Folate-binding domain"/>
    <property type="match status" value="1"/>
</dbReference>
<evidence type="ECO:0000250" key="1">
    <source>
        <dbReference type="UniProtKB" id="P47158"/>
    </source>
</evidence>
<evidence type="ECO:0000255" key="2"/>
<evidence type="ECO:0000256" key="3">
    <source>
        <dbReference type="SAM" id="MobiDB-lite"/>
    </source>
</evidence>
<evidence type="ECO:0000305" key="4"/>
<keyword id="KW-0496">Mitochondrion</keyword>
<keyword id="KW-1185">Reference proteome</keyword>
<keyword id="KW-0809">Transit peptide</keyword>
<feature type="transit peptide" description="Mitochondrion" evidence="2">
    <location>
        <begin position="1"/>
        <end position="99"/>
    </location>
</feature>
<feature type="chain" id="PRO_0000301709" description="Iron-sulfur cluster assembly factor IBA57 homolog, mitochondrial">
    <location>
        <begin position="100"/>
        <end position="479"/>
    </location>
</feature>
<feature type="region of interest" description="Disordered" evidence="3">
    <location>
        <begin position="341"/>
        <end position="395"/>
    </location>
</feature>
<feature type="compositionally biased region" description="Polar residues" evidence="3">
    <location>
        <begin position="341"/>
        <end position="351"/>
    </location>
</feature>
<feature type="compositionally biased region" description="Basic and acidic residues" evidence="3">
    <location>
        <begin position="353"/>
        <end position="364"/>
    </location>
</feature>
<organism>
    <name type="scientific">Yarrowia lipolytica (strain CLIB 122 / E 150)</name>
    <name type="common">Yeast</name>
    <name type="synonym">Candida lipolytica</name>
    <dbReference type="NCBI Taxonomy" id="284591"/>
    <lineage>
        <taxon>Eukaryota</taxon>
        <taxon>Fungi</taxon>
        <taxon>Dikarya</taxon>
        <taxon>Ascomycota</taxon>
        <taxon>Saccharomycotina</taxon>
        <taxon>Dipodascomycetes</taxon>
        <taxon>Dipodascales</taxon>
        <taxon>Dipodascales incertae sedis</taxon>
        <taxon>Yarrowia</taxon>
    </lineage>
</organism>
<protein>
    <recommendedName>
        <fullName>Iron-sulfur cluster assembly factor IBA57 homolog, mitochondrial</fullName>
    </recommendedName>
</protein>
<name>CAF17_YARLI</name>
<sequence>MGIDVPLFRQMTPMGHRLSSTRPNYMTSIRLKSTIPHVGRVDLTNSKTMVHVSGRDAAKLLNGLFTLPVSSGAATPFSGVFGAFLNGKGRVITDAFLYTTSNHTEEDQSFVIEFDKAVEDELLLHLKRHRIRAKVKMEKLTDYECIFIWNRDATPDYWRRENECDSGFFQSLCEVAWSVAEVGETSEVEEKNGEPAQKPLYGLLVDDRYPLLGIRMILPAKTSTTYFSAIPSANLTQYNMLRYIRGTPEGSREIPPNKALPMESDLDYMNGLDFNRGCYVGQELTIRTHHTGVVRKRIVPFQLYQEGQEPGEYECQYDPELSGALPPLLDGSNVISLNSQPEERTFASSPFDSPKKEAEPKSEEAASEGGVPSWAKPKETDAAESNLPNKPKPVKLGNILSHHGNVGMALVRLDKIMQQQDIQLAVELPPGPNGEVNYLRAKLYYPLFVTDVSEAEAEAEAELEMERVRKEETHKNGQL</sequence>
<reference key="1">
    <citation type="journal article" date="2004" name="Nature">
        <title>Genome evolution in yeasts.</title>
        <authorList>
            <person name="Dujon B."/>
            <person name="Sherman D."/>
            <person name="Fischer G."/>
            <person name="Durrens P."/>
            <person name="Casaregola S."/>
            <person name="Lafontaine I."/>
            <person name="de Montigny J."/>
            <person name="Marck C."/>
            <person name="Neuveglise C."/>
            <person name="Talla E."/>
            <person name="Goffard N."/>
            <person name="Frangeul L."/>
            <person name="Aigle M."/>
            <person name="Anthouard V."/>
            <person name="Babour A."/>
            <person name="Barbe V."/>
            <person name="Barnay S."/>
            <person name="Blanchin S."/>
            <person name="Beckerich J.-M."/>
            <person name="Beyne E."/>
            <person name="Bleykasten C."/>
            <person name="Boisrame A."/>
            <person name="Boyer J."/>
            <person name="Cattolico L."/>
            <person name="Confanioleri F."/>
            <person name="de Daruvar A."/>
            <person name="Despons L."/>
            <person name="Fabre E."/>
            <person name="Fairhead C."/>
            <person name="Ferry-Dumazet H."/>
            <person name="Groppi A."/>
            <person name="Hantraye F."/>
            <person name="Hennequin C."/>
            <person name="Jauniaux N."/>
            <person name="Joyet P."/>
            <person name="Kachouri R."/>
            <person name="Kerrest A."/>
            <person name="Koszul R."/>
            <person name="Lemaire M."/>
            <person name="Lesur I."/>
            <person name="Ma L."/>
            <person name="Muller H."/>
            <person name="Nicaud J.-M."/>
            <person name="Nikolski M."/>
            <person name="Oztas S."/>
            <person name="Ozier-Kalogeropoulos O."/>
            <person name="Pellenz S."/>
            <person name="Potier S."/>
            <person name="Richard G.-F."/>
            <person name="Straub M.-L."/>
            <person name="Suleau A."/>
            <person name="Swennen D."/>
            <person name="Tekaia F."/>
            <person name="Wesolowski-Louvel M."/>
            <person name="Westhof E."/>
            <person name="Wirth B."/>
            <person name="Zeniou-Meyer M."/>
            <person name="Zivanovic Y."/>
            <person name="Bolotin-Fukuhara M."/>
            <person name="Thierry A."/>
            <person name="Bouchier C."/>
            <person name="Caudron B."/>
            <person name="Scarpelli C."/>
            <person name="Gaillardin C."/>
            <person name="Weissenbach J."/>
            <person name="Wincker P."/>
            <person name="Souciet J.-L."/>
        </authorList>
    </citation>
    <scope>NUCLEOTIDE SEQUENCE [LARGE SCALE GENOMIC DNA]</scope>
    <source>
        <strain>CLIB 122 / E 150</strain>
    </source>
</reference>
<accession>Q6C8Y7</accession>
<gene>
    <name type="primary">CAF17</name>
    <name type="ordered locus">YALI0D15774g</name>
</gene>
<comment type="subcellular location">
    <subcellularLocation>
        <location evidence="1">Mitochondrion matrix</location>
    </subcellularLocation>
</comment>
<comment type="similarity">
    <text evidence="4">Belongs to the GcvT family. CAF17/IBA57 subfamily.</text>
</comment>
<proteinExistence type="inferred from homology"/>